<comment type="function">
    <text evidence="8">May be involved in sterol transfer between intracellular membranes.</text>
</comment>
<comment type="subunit">
    <text evidence="9">Interacts with SNF1.</text>
</comment>
<comment type="subcellular location">
    <subcellularLocation>
        <location evidence="8">Endoplasmic reticulum membrane</location>
        <topology evidence="2">Single-pass membrane protein</topology>
    </subcellularLocation>
    <text evidence="8">Localizes to puncta in the cell periphery representing cortical endoplasmic reticulum (cER)-plasma membrane (PM) membrane contact sites.</text>
</comment>
<comment type="domain">
    <text evidence="1">The VASt domain bind sterols.</text>
</comment>
<comment type="miscellaneous">
    <text evidence="6">Present with 432 molecules/cell in log phase SD medium.</text>
</comment>
<comment type="similarity">
    <text evidence="12">Belongs to the SIP3 family.</text>
</comment>
<reference key="1">
    <citation type="journal article" date="1994" name="Nucleic Acids Res.">
        <title>Analysis of the SIP3 protein identified in a two-hybrid screen for interaction with the SNF1 protein kinase.</title>
        <authorList>
            <person name="Lesage P."/>
            <person name="Yang X."/>
            <person name="Carlson M."/>
        </authorList>
    </citation>
    <scope>NUCLEOTIDE SEQUENCE [GENOMIC DNA]</scope>
    <scope>INTERACTION WITH SNF1</scope>
    <source>
        <strain>ATCC 204508 / S288c</strain>
    </source>
</reference>
<reference key="2">
    <citation type="journal article" date="1997" name="Yeast">
        <title>Sequence analysis of the 33 kb long region between ORC5 and SUI1 from the left arm of chromosome XIV from Saccharomyces cerevisiae.</title>
        <authorList>
            <person name="Sen-Gupta M."/>
            <person name="Gueldener U."/>
            <person name="Beinhauer J.D."/>
            <person name="Fiedler T.A."/>
            <person name="Hegemann J.H."/>
        </authorList>
    </citation>
    <scope>NUCLEOTIDE SEQUENCE [GENOMIC DNA]</scope>
    <source>
        <strain>ATCC 96604 / S288c / FY1679</strain>
    </source>
</reference>
<reference key="3">
    <citation type="journal article" date="1997" name="Nature">
        <title>The nucleotide sequence of Saccharomyces cerevisiae chromosome XIV and its evolutionary implications.</title>
        <authorList>
            <person name="Philippsen P."/>
            <person name="Kleine K."/>
            <person name="Poehlmann R."/>
            <person name="Duesterhoeft A."/>
            <person name="Hamberg K."/>
            <person name="Hegemann J.H."/>
            <person name="Obermaier B."/>
            <person name="Urrestarazu L.A."/>
            <person name="Aert R."/>
            <person name="Albermann K."/>
            <person name="Altmann R."/>
            <person name="Andre B."/>
            <person name="Baladron V."/>
            <person name="Ballesta J.P.G."/>
            <person name="Becam A.-M."/>
            <person name="Beinhauer J.D."/>
            <person name="Boskovic J."/>
            <person name="Buitrago M.J."/>
            <person name="Bussereau F."/>
            <person name="Coster F."/>
            <person name="Crouzet M."/>
            <person name="D'Angelo M."/>
            <person name="Dal Pero F."/>
            <person name="De Antoni A."/>
            <person name="del Rey F."/>
            <person name="Doignon F."/>
            <person name="Domdey H."/>
            <person name="Dubois E."/>
            <person name="Fiedler T.A."/>
            <person name="Fleig U."/>
            <person name="Floeth M."/>
            <person name="Fritz C."/>
            <person name="Gaillardin C."/>
            <person name="Garcia-Cantalejo J.M."/>
            <person name="Glansdorff N."/>
            <person name="Goffeau A."/>
            <person name="Gueldener U."/>
            <person name="Herbert C.J."/>
            <person name="Heumann K."/>
            <person name="Heuss-Neitzel D."/>
            <person name="Hilbert H."/>
            <person name="Hinni K."/>
            <person name="Iraqui Houssaini I."/>
            <person name="Jacquet M."/>
            <person name="Jimenez A."/>
            <person name="Jonniaux J.-L."/>
            <person name="Karpfinger-Hartl L."/>
            <person name="Lanfranchi G."/>
            <person name="Lepingle A."/>
            <person name="Levesque H."/>
            <person name="Lyck R."/>
            <person name="Maftahi M."/>
            <person name="Mallet L."/>
            <person name="Maurer C.T.C."/>
            <person name="Messenguy F."/>
            <person name="Mewes H.-W."/>
            <person name="Moestl D."/>
            <person name="Nasr F."/>
            <person name="Nicaud J.-M."/>
            <person name="Niedenthal R.K."/>
            <person name="Pandolfo D."/>
            <person name="Pierard A."/>
            <person name="Piravandi E."/>
            <person name="Planta R.J."/>
            <person name="Pohl T.M."/>
            <person name="Purnelle B."/>
            <person name="Rebischung C."/>
            <person name="Remacha M.A."/>
            <person name="Revuelta J.L."/>
            <person name="Rinke M."/>
            <person name="Saiz J.E."/>
            <person name="Sartorello F."/>
            <person name="Scherens B."/>
            <person name="Sen-Gupta M."/>
            <person name="Soler-Mira A."/>
            <person name="Urbanus J.H.M."/>
            <person name="Valle G."/>
            <person name="Van Dyck L."/>
            <person name="Verhasselt P."/>
            <person name="Vierendeels F."/>
            <person name="Vissers S."/>
            <person name="Voet M."/>
            <person name="Volckaert G."/>
            <person name="Wach A."/>
            <person name="Wambutt R."/>
            <person name="Wedler H."/>
            <person name="Zollner A."/>
            <person name="Hani J."/>
        </authorList>
    </citation>
    <scope>NUCLEOTIDE SEQUENCE [LARGE SCALE GENOMIC DNA]</scope>
    <source>
        <strain>ATCC 204508 / S288c</strain>
    </source>
</reference>
<reference key="4">
    <citation type="journal article" date="2014" name="G3 (Bethesda)">
        <title>The reference genome sequence of Saccharomyces cerevisiae: Then and now.</title>
        <authorList>
            <person name="Engel S.R."/>
            <person name="Dietrich F.S."/>
            <person name="Fisk D.G."/>
            <person name="Binkley G."/>
            <person name="Balakrishnan R."/>
            <person name="Costanzo M.C."/>
            <person name="Dwight S.S."/>
            <person name="Hitz B.C."/>
            <person name="Karra K."/>
            <person name="Nash R.S."/>
            <person name="Weng S."/>
            <person name="Wong E.D."/>
            <person name="Lloyd P."/>
            <person name="Skrzypek M.S."/>
            <person name="Miyasato S.R."/>
            <person name="Simison M."/>
            <person name="Cherry J.M."/>
        </authorList>
    </citation>
    <scope>GENOME REANNOTATION</scope>
    <source>
        <strain>ATCC 204508 / S288c</strain>
    </source>
</reference>
<reference key="5">
    <citation type="journal article" date="2003" name="Nature">
        <title>Global analysis of protein expression in yeast.</title>
        <authorList>
            <person name="Ghaemmaghami S."/>
            <person name="Huh W.-K."/>
            <person name="Bower K."/>
            <person name="Howson R.W."/>
            <person name="Belle A."/>
            <person name="Dephoure N."/>
            <person name="O'Shea E.K."/>
            <person name="Weissman J.S."/>
        </authorList>
    </citation>
    <scope>LEVEL OF PROTEIN EXPRESSION [LARGE SCALE ANALYSIS]</scope>
</reference>
<reference key="6">
    <citation type="journal article" date="2006" name="Proc. Natl. Acad. Sci. U.S.A.">
        <title>A global topology map of the Saccharomyces cerevisiae membrane proteome.</title>
        <authorList>
            <person name="Kim H."/>
            <person name="Melen K."/>
            <person name="Oesterberg M."/>
            <person name="von Heijne G."/>
        </authorList>
    </citation>
    <scope>TOPOLOGY [LARGE SCALE ANALYSIS]</scope>
    <source>
        <strain>ATCC 208353 / W303-1A</strain>
    </source>
</reference>
<reference key="7">
    <citation type="journal article" date="2015" name="Elife">
        <title>A new family of StART domain proteins at membrane contact sites has a role in ER-PM sterol transport.</title>
        <authorList>
            <person name="Gatta A.T."/>
            <person name="Wong L.H."/>
            <person name="Sere Y.Y."/>
            <person name="Calderon-Norena D.M."/>
            <person name="Cockcroft S."/>
            <person name="Menon A.K."/>
            <person name="Levine T.P."/>
        </authorList>
    </citation>
    <scope>FUNCTION</scope>
    <scope>SUBCELLULAR LOCATION</scope>
</reference>
<evidence type="ECO:0000250" key="1">
    <source>
        <dbReference type="UniProtKB" id="P38800"/>
    </source>
</evidence>
<evidence type="ECO:0000255" key="2"/>
<evidence type="ECO:0000255" key="3">
    <source>
        <dbReference type="PROSITE-ProRule" id="PRU00145"/>
    </source>
</evidence>
<evidence type="ECO:0000255" key="4">
    <source>
        <dbReference type="PROSITE-ProRule" id="PRU00498"/>
    </source>
</evidence>
<evidence type="ECO:0000255" key="5">
    <source>
        <dbReference type="PROSITE-ProRule" id="PRU01114"/>
    </source>
</evidence>
<evidence type="ECO:0000269" key="6">
    <source>
    </source>
</evidence>
<evidence type="ECO:0000269" key="7">
    <source>
    </source>
</evidence>
<evidence type="ECO:0000269" key="8">
    <source>
    </source>
</evidence>
<evidence type="ECO:0000269" key="9">
    <source>
    </source>
</evidence>
<evidence type="ECO:0000303" key="10">
    <source>
    </source>
</evidence>
<evidence type="ECO:0000303" key="11">
    <source>
    </source>
</evidence>
<evidence type="ECO:0000305" key="12"/>
<evidence type="ECO:0000305" key="13">
    <source>
    </source>
</evidence>
<evidence type="ECO:0000305" key="14">
    <source>
    </source>
</evidence>
<evidence type="ECO:0000312" key="15">
    <source>
        <dbReference type="SGD" id="S000005201"/>
    </source>
</evidence>
<proteinExistence type="evidence at protein level"/>
<dbReference type="EMBL" id="U03376">
    <property type="protein sequence ID" value="AAA17885.1"/>
    <property type="molecule type" value="Genomic_DNA"/>
</dbReference>
<dbReference type="EMBL" id="X96722">
    <property type="protein sequence ID" value="CAA65487.1"/>
    <property type="molecule type" value="Genomic_DNA"/>
</dbReference>
<dbReference type="EMBL" id="Z71533">
    <property type="protein sequence ID" value="CAA96164.1"/>
    <property type="molecule type" value="Genomic_DNA"/>
</dbReference>
<dbReference type="EMBL" id="BK006947">
    <property type="protein sequence ID" value="DAA10302.1"/>
    <property type="molecule type" value="Genomic_DNA"/>
</dbReference>
<dbReference type="PIR" id="S42391">
    <property type="entry name" value="S42391"/>
</dbReference>
<dbReference type="RefSeq" id="NP_014142.1">
    <property type="nucleotide sequence ID" value="NM_001183095.1"/>
</dbReference>
<dbReference type="BioGRID" id="35582">
    <property type="interactions" value="78"/>
</dbReference>
<dbReference type="DIP" id="DIP-780N"/>
<dbReference type="FunCoup" id="P38717">
    <property type="interactions" value="27"/>
</dbReference>
<dbReference type="IntAct" id="P38717">
    <property type="interactions" value="8"/>
</dbReference>
<dbReference type="STRING" id="4932.YNL257C"/>
<dbReference type="TCDB" id="9.B.198.1.2">
    <property type="family name" value="the membrane-anchored lipid-binding protein (lam) family"/>
</dbReference>
<dbReference type="GlyCosmos" id="P38717">
    <property type="glycosylation" value="1 site, No reported glycans"/>
</dbReference>
<dbReference type="GlyGen" id="P38717">
    <property type="glycosylation" value="1 site"/>
</dbReference>
<dbReference type="iPTMnet" id="P38717"/>
<dbReference type="PaxDb" id="4932-YNL257C"/>
<dbReference type="PeptideAtlas" id="P38717"/>
<dbReference type="EnsemblFungi" id="YNL257C_mRNA">
    <property type="protein sequence ID" value="YNL257C"/>
    <property type="gene ID" value="YNL257C"/>
</dbReference>
<dbReference type="GeneID" id="855464"/>
<dbReference type="KEGG" id="sce:YNL257C"/>
<dbReference type="AGR" id="SGD:S000005201"/>
<dbReference type="SGD" id="S000005201">
    <property type="gene designation" value="SIP3"/>
</dbReference>
<dbReference type="VEuPathDB" id="FungiDB:YNL257C"/>
<dbReference type="eggNOG" id="ENOG502QU87">
    <property type="taxonomic scope" value="Eukaryota"/>
</dbReference>
<dbReference type="GeneTree" id="ENSGT00940000154453"/>
<dbReference type="HOGENOM" id="CLU_001720_0_0_1"/>
<dbReference type="InParanoid" id="P38717"/>
<dbReference type="OMA" id="TKVEWLW"/>
<dbReference type="OrthoDB" id="10070851at2759"/>
<dbReference type="BioCyc" id="YEAST:G3O-33253-MONOMER"/>
<dbReference type="BioGRID-ORCS" id="855464">
    <property type="hits" value="0 hits in 10 CRISPR screens"/>
</dbReference>
<dbReference type="PRO" id="PR:P38717"/>
<dbReference type="Proteomes" id="UP000002311">
    <property type="component" value="Chromosome XIV"/>
</dbReference>
<dbReference type="RNAct" id="P38717">
    <property type="molecule type" value="protein"/>
</dbReference>
<dbReference type="GO" id="GO:0032541">
    <property type="term" value="C:cortical endoplasmic reticulum"/>
    <property type="evidence" value="ECO:0000314"/>
    <property type="project" value="SGD"/>
</dbReference>
<dbReference type="GO" id="GO:0005737">
    <property type="term" value="C:cytoplasm"/>
    <property type="evidence" value="ECO:0007005"/>
    <property type="project" value="SGD"/>
</dbReference>
<dbReference type="GO" id="GO:0005783">
    <property type="term" value="C:endoplasmic reticulum"/>
    <property type="evidence" value="ECO:0007005"/>
    <property type="project" value="SGD"/>
</dbReference>
<dbReference type="GO" id="GO:0005789">
    <property type="term" value="C:endoplasmic reticulum membrane"/>
    <property type="evidence" value="ECO:0007669"/>
    <property type="project" value="UniProtKB-SubCell"/>
</dbReference>
<dbReference type="GO" id="GO:0005886">
    <property type="term" value="C:plasma membrane"/>
    <property type="evidence" value="ECO:0007005"/>
    <property type="project" value="SGD"/>
</dbReference>
<dbReference type="GO" id="GO:0003712">
    <property type="term" value="F:transcription coregulator activity"/>
    <property type="evidence" value="ECO:0000314"/>
    <property type="project" value="SGD"/>
</dbReference>
<dbReference type="GO" id="GO:0032366">
    <property type="term" value="P:intracellular sterol transport"/>
    <property type="evidence" value="ECO:0000315"/>
    <property type="project" value="SGD"/>
</dbReference>
<dbReference type="GO" id="GO:0045944">
    <property type="term" value="P:positive regulation of transcription by RNA polymerase II"/>
    <property type="evidence" value="ECO:0000314"/>
    <property type="project" value="SGD"/>
</dbReference>
<dbReference type="CDD" id="cd07609">
    <property type="entry name" value="BAR_SIP3_fungi"/>
    <property type="match status" value="1"/>
</dbReference>
<dbReference type="CDD" id="cd13280">
    <property type="entry name" value="PH_SIP3"/>
    <property type="match status" value="1"/>
</dbReference>
<dbReference type="FunFam" id="2.30.29.30:FF:000426">
    <property type="entry name" value="Ysp1p"/>
    <property type="match status" value="1"/>
</dbReference>
<dbReference type="Gene3D" id="1.20.1270.60">
    <property type="entry name" value="Arfaptin homology (AH) domain/BAR domain"/>
    <property type="match status" value="1"/>
</dbReference>
<dbReference type="Gene3D" id="2.30.29.30">
    <property type="entry name" value="Pleckstrin-homology domain (PH domain)/Phosphotyrosine-binding domain (PTB)"/>
    <property type="match status" value="1"/>
</dbReference>
<dbReference type="InterPro" id="IPR027267">
    <property type="entry name" value="AH/BAR_dom_sf"/>
</dbReference>
<dbReference type="InterPro" id="IPR004148">
    <property type="entry name" value="BAR_dom"/>
</dbReference>
<dbReference type="InterPro" id="IPR011993">
    <property type="entry name" value="PH-like_dom_sf"/>
</dbReference>
<dbReference type="InterPro" id="IPR001849">
    <property type="entry name" value="PH_domain"/>
</dbReference>
<dbReference type="InterPro" id="IPR039463">
    <property type="entry name" value="Sip3/Lam1_BAR"/>
</dbReference>
<dbReference type="InterPro" id="IPR042067">
    <property type="entry name" value="Sip3_PH"/>
</dbReference>
<dbReference type="InterPro" id="IPR031968">
    <property type="entry name" value="VASt"/>
</dbReference>
<dbReference type="PANTHER" id="PTHR14248">
    <property type="entry name" value="CYCLIN Y, ISOFORM A"/>
    <property type="match status" value="1"/>
</dbReference>
<dbReference type="Pfam" id="PF16746">
    <property type="entry name" value="BAR_3"/>
    <property type="match status" value="1"/>
</dbReference>
<dbReference type="Pfam" id="PF00169">
    <property type="entry name" value="PH"/>
    <property type="match status" value="1"/>
</dbReference>
<dbReference type="Pfam" id="PF16016">
    <property type="entry name" value="VASt"/>
    <property type="match status" value="1"/>
</dbReference>
<dbReference type="SMART" id="SM00233">
    <property type="entry name" value="PH"/>
    <property type="match status" value="1"/>
</dbReference>
<dbReference type="SUPFAM" id="SSF103657">
    <property type="entry name" value="BAR/IMD domain-like"/>
    <property type="match status" value="1"/>
</dbReference>
<dbReference type="SUPFAM" id="SSF50729">
    <property type="entry name" value="PH domain-like"/>
    <property type="match status" value="1"/>
</dbReference>
<dbReference type="PROSITE" id="PS50003">
    <property type="entry name" value="PH_DOMAIN"/>
    <property type="match status" value="1"/>
</dbReference>
<dbReference type="PROSITE" id="PS51778">
    <property type="entry name" value="VAST"/>
    <property type="match status" value="1"/>
</dbReference>
<name>SIP3_YEAST</name>
<feature type="chain" id="PRO_0000097765" description="Membrane-anchored lipid-binding protein SIP3">
    <location>
        <begin position="1"/>
        <end position="1229"/>
    </location>
</feature>
<feature type="topological domain" description="Cytoplasmic" evidence="13 14">
    <location>
        <begin position="1"/>
        <end position="1066"/>
    </location>
</feature>
<feature type="transmembrane region" description="Helical" evidence="2">
    <location>
        <begin position="1067"/>
        <end position="1087"/>
    </location>
</feature>
<feature type="topological domain" description="Lumenal" evidence="7">
    <location>
        <begin position="1088"/>
        <end position="1229"/>
    </location>
</feature>
<feature type="domain" description="PH" evidence="3">
    <location>
        <begin position="309"/>
        <end position="423"/>
    </location>
</feature>
<feature type="domain" description="VASt" evidence="5">
    <location>
        <begin position="771"/>
        <end position="976"/>
    </location>
</feature>
<feature type="glycosylation site" description="N-linked (GlcNAc...) asparagine" evidence="4">
    <location>
        <position position="1206"/>
    </location>
</feature>
<gene>
    <name evidence="11" type="primary">SIP3</name>
    <name evidence="10" type="synonym">LAM3</name>
    <name evidence="15" type="ordered locus">YNL257C</name>
    <name type="ORF">N0844</name>
</gene>
<keyword id="KW-0256">Endoplasmic reticulum</keyword>
<keyword id="KW-0325">Glycoprotein</keyword>
<keyword id="KW-0472">Membrane</keyword>
<keyword id="KW-1185">Reference proteome</keyword>
<keyword id="KW-0812">Transmembrane</keyword>
<keyword id="KW-1133">Transmembrane helix</keyword>
<protein>
    <recommendedName>
        <fullName evidence="10">Membrane-anchored lipid-binding protein SIP3</fullName>
    </recommendedName>
    <alternativeName>
        <fullName evidence="10">Lipid transfer protein anchored at membrane contact sites 3</fullName>
    </alternativeName>
    <alternativeName>
        <fullName evidence="11">SNF1-interacting protein 3</fullName>
    </alternativeName>
</protein>
<accession>P38717</accession>
<accession>D6W0T6</accession>
<organism>
    <name type="scientific">Saccharomyces cerevisiae (strain ATCC 204508 / S288c)</name>
    <name type="common">Baker's yeast</name>
    <dbReference type="NCBI Taxonomy" id="559292"/>
    <lineage>
        <taxon>Eukaryota</taxon>
        <taxon>Fungi</taxon>
        <taxon>Dikarya</taxon>
        <taxon>Ascomycota</taxon>
        <taxon>Saccharomycotina</taxon>
        <taxon>Saccharomycetes</taxon>
        <taxon>Saccharomycetales</taxon>
        <taxon>Saccharomycetaceae</taxon>
        <taxon>Saccharomyces</taxon>
    </lineage>
</organism>
<sequence>MSVHGRDPKKRQLRLISVAFKEASIDSPSFRASVNFFQTRVDALEDWIEKTVDFFDQKYKVSFEDFRRAKETLLSQLLPPPALLSNGFVSNQSFTPRLIDSFNKDYYDFSMKLLQIVKGDDSSHSTALLELMTTAIEPYRNVRKNFDFYQGKYDSMLASYQAIRISKTSLEPSSIKSDALQLFEVQKNYLKASLDLISAISAVKLSLDKFILESMKVLKSRSIFITKDSGRKIDLSPCINEYLDNYAIWVENSIEGSKVLDSDISNAKKQAYRYTLKRITPSSDTSDYNIRSIHSSKLLSKDTQVPPKSPEKSGWLYMKTQVGKPTREIWVRRWCFLKNAVFGMFLLSPSKTYVEETDKFGVFLTNVRYDPEEDRKFCFEVKIFGNKVTEAHDNMSKDITLVFQTSNYLDLKSWLIAFEATKKYVMSIQHDSLEYELAFKRFSPKFFEFASSTTTSIDQLITTFDKETESLYETLNCSISEYDILTLGEEKVFQFQMPTTPISTKMTQLAILSNFLTKGSWFPNAVLANIWGTTDWSEYTILPGKGKKPSSLLTIDGKRLPIRNSTIYPQYYSNELKVLDLQFKSLVFSPDQRLEKLPEELLLFKFEALWCPNKKQKFSATCFCTKDYIYCYMNSMEFICLTKISLSEIVSVEADRSSKKTLKLYDASGLQMKAIVLFSDYKLIASKLQYLLENKAIKNPNSNEEILVKFEQMEKESQEKKQEELYKIEQENSFDRKATSVSKIIKSRVTFWEMSDDASTLLNRLKKLQTEYSITYNHEYEISSKGLAHILFGDKSNAFPKCLFLARKDGEEHGKRFWYKNKDINGKSQLVRKIPFRLDMTGNFLNTGKYHRDKESKMIFATQRIVKIVDNKYYEVDLDPFFVKVPFCHLLKLSIKFVITESYDVDNHLEIKLNMTASSSSLHVLYKLEYIDSRTGKTIEKLSLAEIICQTWALKFAHSEFLLIRRVLRYYLEKIGKHGKVIKAIKLCGILGVLSNKSEEPATEKNGNSKESESMQYDIRYSCTILFLVFIKLMVYRVTNLTFVFFRILIGILLLCAEKFSRINRMMVVGLLASIMINILLSEKASVPYWSIKRAEKLFHDRLGSDKFTMQRAIYISDSDLLSSQLSVPSNNPIFEKFSEDNFNKDYQYSETRKQLAMRRNELLIELRILQDMEKQLVHDDYEKFLLEEVNKCSMVSIEMTDLWFNDTQLQNYCSICNEELEKLRPPIT</sequence>